<comment type="function">
    <text evidence="1 2 3">DNA glycosylase with broad substrate specificity. Can remove uracil from double-stranded DNA containing either a U/G, U/A, U/C or U/T base pair (PubMed:12000829, PubMed:17870091, PubMed:24838246). Can also excise hypoxanthine from double-stranded DNA containing G/I, T/I, and A/I base pairs, xanthine from both double-stranded and single stranded DNA, thymine from G/T mismatched DNA, 5'-hydroxymethyluracil and 5'-fluorouracil (PubMed:17870091, PubMed:24838246).</text>
</comment>
<comment type="similarity">
    <text evidence="7">Belongs to the uracil-DNA glycosylase (UDG) superfamily. Type 5 (UDGb) family.</text>
</comment>
<dbReference type="EC" id="3.2.2.-" evidence="1 2 3"/>
<dbReference type="EMBL" id="AP008226">
    <property type="protein sequence ID" value="BAD70972.1"/>
    <property type="molecule type" value="Genomic_DNA"/>
</dbReference>
<dbReference type="RefSeq" id="WP_011173217.1">
    <property type="nucleotide sequence ID" value="NC_006461.1"/>
</dbReference>
<dbReference type="RefSeq" id="YP_144415.1">
    <property type="nucleotide sequence ID" value="NC_006461.1"/>
</dbReference>
<dbReference type="PDB" id="2D3Y">
    <property type="method" value="X-ray"/>
    <property type="resolution" value="1.55 A"/>
    <property type="chains" value="A=1-219"/>
</dbReference>
<dbReference type="PDB" id="2DDG">
    <property type="method" value="X-ray"/>
    <property type="resolution" value="2.10 A"/>
    <property type="chains" value="A=1-219"/>
</dbReference>
<dbReference type="PDB" id="2DEM">
    <property type="method" value="X-ray"/>
    <property type="resolution" value="1.95 A"/>
    <property type="chains" value="A=1-219"/>
</dbReference>
<dbReference type="PDB" id="2DP6">
    <property type="method" value="X-ray"/>
    <property type="resolution" value="1.80 A"/>
    <property type="chains" value="A=1-219"/>
</dbReference>
<dbReference type="PDBsum" id="2D3Y"/>
<dbReference type="PDBsum" id="2DDG"/>
<dbReference type="PDBsum" id="2DEM"/>
<dbReference type="PDBsum" id="2DP6"/>
<dbReference type="SMR" id="Q5SJ65"/>
<dbReference type="EnsemblBacteria" id="BAD70972">
    <property type="protein sequence ID" value="BAD70972"/>
    <property type="gene ID" value="BAD70972"/>
</dbReference>
<dbReference type="GeneID" id="3169333"/>
<dbReference type="KEGG" id="ttj:TTHA1149"/>
<dbReference type="PATRIC" id="fig|300852.9.peg.1128"/>
<dbReference type="eggNOG" id="COG1573">
    <property type="taxonomic scope" value="Bacteria"/>
</dbReference>
<dbReference type="HOGENOM" id="CLU_083279_0_0_0"/>
<dbReference type="PhylomeDB" id="Q5SJ65"/>
<dbReference type="BRENDA" id="3.2.2.15">
    <property type="organism ID" value="2305"/>
</dbReference>
<dbReference type="BRENDA" id="3.2.2.28">
    <property type="organism ID" value="2305"/>
</dbReference>
<dbReference type="EvolutionaryTrace" id="Q5SJ65"/>
<dbReference type="Proteomes" id="UP000000532">
    <property type="component" value="Chromosome"/>
</dbReference>
<dbReference type="GO" id="GO:0051539">
    <property type="term" value="F:4 iron, 4 sulfur cluster binding"/>
    <property type="evidence" value="ECO:0000314"/>
    <property type="project" value="UniProtKB"/>
</dbReference>
<dbReference type="GO" id="GO:0097506">
    <property type="term" value="F:deaminated base DNA N-glycosylase activity"/>
    <property type="evidence" value="ECO:0000314"/>
    <property type="project" value="UniProtKB"/>
</dbReference>
<dbReference type="GO" id="GO:0033958">
    <property type="term" value="F:DNA-deoxyinosine glycosylase activity"/>
    <property type="evidence" value="ECO:0007669"/>
    <property type="project" value="InterPro"/>
</dbReference>
<dbReference type="GO" id="GO:0046872">
    <property type="term" value="F:metal ion binding"/>
    <property type="evidence" value="ECO:0007669"/>
    <property type="project" value="UniProtKB-KW"/>
</dbReference>
<dbReference type="GO" id="GO:0004844">
    <property type="term" value="F:uracil DNA N-glycosylase activity"/>
    <property type="evidence" value="ECO:0007669"/>
    <property type="project" value="InterPro"/>
</dbReference>
<dbReference type="GO" id="GO:0006284">
    <property type="term" value="P:base-excision repair"/>
    <property type="evidence" value="ECO:0007669"/>
    <property type="project" value="InterPro"/>
</dbReference>
<dbReference type="GO" id="GO:0006281">
    <property type="term" value="P:DNA repair"/>
    <property type="evidence" value="ECO:0000314"/>
    <property type="project" value="UniProtKB"/>
</dbReference>
<dbReference type="CDD" id="cd10031">
    <property type="entry name" value="UDG-F5_TTUDGB_like"/>
    <property type="match status" value="1"/>
</dbReference>
<dbReference type="FunFam" id="3.40.470.10:FF:000020">
    <property type="entry name" value="Type-5 uracil-DNA glycosylase"/>
    <property type="match status" value="1"/>
</dbReference>
<dbReference type="Gene3D" id="3.40.470.10">
    <property type="entry name" value="Uracil-DNA glycosylase-like domain"/>
    <property type="match status" value="1"/>
</dbReference>
<dbReference type="InterPro" id="IPR051536">
    <property type="entry name" value="UDG_Type-4/5"/>
</dbReference>
<dbReference type="InterPro" id="IPR044147">
    <property type="entry name" value="UdgB-like"/>
</dbReference>
<dbReference type="InterPro" id="IPR005122">
    <property type="entry name" value="Uracil-DNA_glycosylase-like"/>
</dbReference>
<dbReference type="InterPro" id="IPR036895">
    <property type="entry name" value="Uracil-DNA_glycosylase-like_sf"/>
</dbReference>
<dbReference type="PANTHER" id="PTHR33693">
    <property type="entry name" value="TYPE-5 URACIL-DNA GLYCOSYLASE"/>
    <property type="match status" value="1"/>
</dbReference>
<dbReference type="PANTHER" id="PTHR33693:SF3">
    <property type="entry name" value="TYPE-5 URACIL-DNA GLYCOSYLASE"/>
    <property type="match status" value="1"/>
</dbReference>
<dbReference type="Pfam" id="PF03167">
    <property type="entry name" value="UDG"/>
    <property type="match status" value="1"/>
</dbReference>
<dbReference type="SMART" id="SM00986">
    <property type="entry name" value="UDG"/>
    <property type="match status" value="1"/>
</dbReference>
<dbReference type="SMART" id="SM00987">
    <property type="entry name" value="UreE_C"/>
    <property type="match status" value="1"/>
</dbReference>
<dbReference type="SUPFAM" id="SSF52141">
    <property type="entry name" value="Uracil-DNA glycosylase-like"/>
    <property type="match status" value="1"/>
</dbReference>
<feature type="chain" id="PRO_0000439187" description="Type-5 uracil-DNA glycosylase">
    <location>
        <begin position="1"/>
        <end position="219"/>
    </location>
</feature>
<feature type="binding site" evidence="4 9 10 11">
    <location>
        <position position="13"/>
    </location>
    <ligand>
        <name>[4Fe-4S] cluster</name>
        <dbReference type="ChEBI" id="CHEBI:49883"/>
    </ligand>
</feature>
<feature type="binding site" evidence="4 9 10 11">
    <location>
        <position position="16"/>
    </location>
    <ligand>
        <name>[4Fe-4S] cluster</name>
        <dbReference type="ChEBI" id="CHEBI:49883"/>
    </ligand>
</feature>
<feature type="binding site" evidence="4 9 10 11">
    <location>
        <position position="115"/>
    </location>
    <ligand>
        <name>[4Fe-4S] cluster</name>
        <dbReference type="ChEBI" id="CHEBI:49883"/>
    </ligand>
</feature>
<feature type="binding site" evidence="4 9 10 11">
    <location>
        <position position="130"/>
    </location>
    <ligand>
        <name>[4Fe-4S] cluster</name>
        <dbReference type="ChEBI" id="CHEBI:49883"/>
    </ligand>
</feature>
<feature type="mutagenesis site" description="4-fold decrease in activity." evidence="2">
    <original>L</original>
    <variation>D</variation>
    <location>
        <position position="58"/>
    </location>
</feature>
<feature type="mutagenesis site" description="Loss of xanthine DNA glycosylase (XDG) activity. Decrease in uracil DNA glycosylase (UDG) and hypoxanthine DNA glycosylase (HDG) activities. Shows low activity for the removal of uracil from U/G or thymine from T/G." evidence="2 3">
    <original>D</original>
    <variation>A</variation>
    <location>
        <position position="75"/>
    </location>
</feature>
<feature type="mutagenesis site" description="Retains much of its activity." evidence="3">
    <original>D</original>
    <variation>E</variation>
    <location>
        <position position="75"/>
    </location>
</feature>
<feature type="mutagenesis site" description="Loss of XDG activity, but retains much of its UDG and HDG activities." evidence="3">
    <original>D</original>
    <variation>N</variation>
    <variation>Q</variation>
    <location>
        <position position="75"/>
    </location>
</feature>
<feature type="mutagenesis site" description="Loss of XDG activity. Decrease in UDG and HDG activities." evidence="3">
    <original>N</original>
    <variation>A</variation>
    <location>
        <position position="120"/>
    </location>
</feature>
<feature type="mutagenesis site" description="Minimal effect on UDG and XDG activities. Strong reduction on HDG activity on A/I and T/I base pairs." evidence="3">
    <original>N</original>
    <variation>D</variation>
    <location>
        <position position="120"/>
    </location>
</feature>
<feature type="mutagenesis site" description="Strong decrease in UDG, HDG and XDG activities." evidence="3">
    <original>N</original>
    <variation>E</variation>
    <location>
        <position position="120"/>
    </location>
</feature>
<feature type="mutagenesis site" description="Loss of XDG activity. Strong decrease in UDG and HDG activities." evidence="3">
    <original>N</original>
    <variation>Q</variation>
    <location>
        <position position="120"/>
    </location>
</feature>
<feature type="mutagenesis site" description="Loss of UDG, HDG and XDG activities." evidence="3">
    <original>H</original>
    <variation>A</variation>
    <location>
        <position position="190"/>
    </location>
</feature>
<feature type="mutagenesis site" description="Strong decrease in UDG, HDG and XDG activities." evidence="3">
    <original>H</original>
    <variation>N</variation>
    <variation>S</variation>
    <location>
        <position position="190"/>
    </location>
</feature>
<feature type="mutagenesis site" description="Retains much of its activity." evidence="3">
    <original>N</original>
    <variation>A</variation>
    <variation>D</variation>
    <variation>E</variation>
    <variation>Q</variation>
    <location>
        <position position="195"/>
    </location>
</feature>
<feature type="helix" evidence="13">
    <location>
        <begin position="3"/>
        <end position="10"/>
    </location>
</feature>
<feature type="helix" evidence="13">
    <location>
        <begin position="17"/>
        <end position="25"/>
    </location>
</feature>
<feature type="turn" evidence="13">
    <location>
        <begin position="26"/>
        <end position="29"/>
    </location>
</feature>
<feature type="helix" evidence="13">
    <location>
        <begin position="31"/>
        <end position="33"/>
    </location>
</feature>
<feature type="strand" evidence="13">
    <location>
        <begin position="52"/>
        <end position="58"/>
    </location>
</feature>
<feature type="turn" evidence="13">
    <location>
        <begin position="62"/>
        <end position="64"/>
    </location>
</feature>
<feature type="helix" evidence="13">
    <location>
        <begin position="65"/>
        <end position="68"/>
    </location>
</feature>
<feature type="turn" evidence="13">
    <location>
        <begin position="71"/>
        <end position="74"/>
    </location>
</feature>
<feature type="helix" evidence="13">
    <location>
        <begin position="76"/>
        <end position="87"/>
    </location>
</feature>
<feature type="strand" evidence="14">
    <location>
        <begin position="91"/>
        <end position="94"/>
    </location>
</feature>
<feature type="strand" evidence="13">
    <location>
        <begin position="104"/>
        <end position="112"/>
    </location>
</feature>
<feature type="helix" evidence="13">
    <location>
        <begin position="118"/>
        <end position="120"/>
    </location>
</feature>
<feature type="helix" evidence="13">
    <location>
        <begin position="124"/>
        <end position="139"/>
    </location>
</feature>
<feature type="strand" evidence="13">
    <location>
        <begin position="146"/>
        <end position="151"/>
    </location>
</feature>
<feature type="helix" evidence="13">
    <location>
        <begin position="152"/>
        <end position="162"/>
    </location>
</feature>
<feature type="turn" evidence="13">
    <location>
        <begin position="166"/>
        <end position="168"/>
    </location>
</feature>
<feature type="strand" evidence="13">
    <location>
        <begin position="176"/>
        <end position="179"/>
    </location>
</feature>
<feature type="turn" evidence="13">
    <location>
        <begin position="180"/>
        <end position="182"/>
    </location>
</feature>
<feature type="strand" evidence="13">
    <location>
        <begin position="183"/>
        <end position="188"/>
    </location>
</feature>
<feature type="helix" evidence="13">
    <location>
        <begin position="193"/>
        <end position="198"/>
    </location>
</feature>
<feature type="strand" evidence="13">
    <location>
        <begin position="199"/>
        <end position="201"/>
    </location>
</feature>
<feature type="helix" evidence="13">
    <location>
        <begin position="203"/>
        <end position="216"/>
    </location>
</feature>
<organism>
    <name type="scientific">Thermus thermophilus (strain ATCC 27634 / DSM 579 / HB8)</name>
    <dbReference type="NCBI Taxonomy" id="300852"/>
    <lineage>
        <taxon>Bacteria</taxon>
        <taxon>Thermotogati</taxon>
        <taxon>Deinococcota</taxon>
        <taxon>Deinococci</taxon>
        <taxon>Thermales</taxon>
        <taxon>Thermaceae</taxon>
        <taxon>Thermus</taxon>
    </lineage>
</organism>
<protein>
    <recommendedName>
        <fullName evidence="7">Type-5 uracil-DNA glycosylase</fullName>
        <ecNumber evidence="1 2 3">3.2.2.-</ecNumber>
    </recommendedName>
    <alternativeName>
        <fullName evidence="5">TTUDGB</fullName>
    </alternativeName>
    <alternativeName>
        <fullName evidence="7">Uracil/hypoxanthine/xanthine DNA glycosylase</fullName>
    </alternativeName>
</protein>
<keyword id="KW-0002">3D-structure</keyword>
<keyword id="KW-0004">4Fe-4S</keyword>
<keyword id="KW-0227">DNA damage</keyword>
<keyword id="KW-0234">DNA repair</keyword>
<keyword id="KW-0378">Hydrolase</keyword>
<keyword id="KW-0408">Iron</keyword>
<keyword id="KW-0411">Iron-sulfur</keyword>
<keyword id="KW-0479">Metal-binding</keyword>
<keyword id="KW-1185">Reference proteome</keyword>
<name>UDGB_THET8</name>
<evidence type="ECO:0000269" key="1">
    <source>
    </source>
</evidence>
<evidence type="ECO:0000269" key="2">
    <source>
    </source>
</evidence>
<evidence type="ECO:0000269" key="3">
    <source>
    </source>
</evidence>
<evidence type="ECO:0000269" key="4">
    <source ref="4"/>
</evidence>
<evidence type="ECO:0000303" key="5">
    <source>
    </source>
</evidence>
<evidence type="ECO:0000303" key="6">
    <source>
    </source>
</evidence>
<evidence type="ECO:0000305" key="7"/>
<evidence type="ECO:0000312" key="8">
    <source>
        <dbReference type="EMBL" id="BAD70972.1"/>
    </source>
</evidence>
<evidence type="ECO:0007744" key="9">
    <source>
        <dbReference type="PDB" id="2D3Y"/>
    </source>
</evidence>
<evidence type="ECO:0007744" key="10">
    <source>
        <dbReference type="PDB" id="2DDG"/>
    </source>
</evidence>
<evidence type="ECO:0007744" key="11">
    <source>
        <dbReference type="PDB" id="2DEM"/>
    </source>
</evidence>
<evidence type="ECO:0007744" key="12">
    <source>
        <dbReference type="PDB" id="2DP6"/>
    </source>
</evidence>
<evidence type="ECO:0007829" key="13">
    <source>
        <dbReference type="PDB" id="2D3Y"/>
    </source>
</evidence>
<evidence type="ECO:0007829" key="14">
    <source>
        <dbReference type="PDB" id="2DP6"/>
    </source>
</evidence>
<sequence>MDREAFVQTLTACRLCPRLVAWREEVVGRKRAFRGEPYWARPVPGFGDPEARILLFGLAPGAHGSNRTGRPFTGDASGAFLYPLLHEAGLSSKPESLPGDDLRLYGVYLTAAVRCAPPKNKPTPEELRACARWTEVELGLLPEVRVYVALGRIALEALLAHFGLRKSAHPFRHGAHYPLPGGRHLLASYHVSRQNTQTGRLTREMFLEVLMEAKRLAGL</sequence>
<gene>
    <name evidence="6" type="primary">udgb</name>
    <name evidence="8" type="ordered locus">TTHA1149</name>
</gene>
<reference key="1">
    <citation type="submission" date="2004-11" db="EMBL/GenBank/DDBJ databases">
        <title>Complete genome sequence of Thermus thermophilus HB8.</title>
        <authorList>
            <person name="Masui R."/>
            <person name="Kurokawa K."/>
            <person name="Nakagawa N."/>
            <person name="Tokunaga F."/>
            <person name="Koyama Y."/>
            <person name="Shibata T."/>
            <person name="Oshima T."/>
            <person name="Yokoyama S."/>
            <person name="Yasunaga T."/>
            <person name="Kuramitsu S."/>
        </authorList>
    </citation>
    <scope>NUCLEOTIDE SEQUENCE [LARGE SCALE GENOMIC DNA]</scope>
    <source>
        <strain>ATCC 27634 / DSM 579 / HB8</strain>
    </source>
</reference>
<reference key="2">
    <citation type="journal article" date="2002" name="Nucleic Acids Res.">
        <title>A novel type of uracil-DNA glycosylase mediating repair of hydrolytic DNA damage in the extremely thermophilic eubacterium Thermus thermophilus.</title>
        <authorList>
            <person name="Starkuviene V."/>
            <person name="Fritz H.J."/>
        </authorList>
    </citation>
    <scope>FUNCTION</scope>
    <scope>CATALYTIC ACTIVITY</scope>
    <source>
        <strain>HB27 / ATCC BAA-163 / DSM 7039</strain>
    </source>
</reference>
<reference key="3">
    <citation type="journal article" date="2014" name="J. Biol. Chem.">
        <title>Specificity and catalytic mechanism in family 5 uracil DNA glycosylase.</title>
        <authorList>
            <person name="Xia B."/>
            <person name="Liu Y."/>
            <person name="Li W."/>
            <person name="Brice A.R."/>
            <person name="Dominy B.N."/>
            <person name="Cao W."/>
        </authorList>
    </citation>
    <scope>FUNCTION</scope>
    <scope>CATALYTIC ACTIVITY</scope>
    <scope>MUTAGENESIS OF ASP-75; ASN-120; HIS-190 AND ASN-195</scope>
    <source>
        <strain>ATCC 27634 / DSM 579 / HB8</strain>
    </source>
</reference>
<reference evidence="12" key="4">
    <citation type="submission" date="2006-05" db="PDB data bank">
        <title>Structure of family 5 uracil-DNA glycosylase bound to DNA reveals insights into the mechanism for substrate recognition and catalysis.</title>
        <authorList>
            <person name="Kosaka H."/>
            <person name="Nakagawa N."/>
            <person name="Masui R."/>
            <person name="Kuramitsu S."/>
        </authorList>
    </citation>
    <scope>X-RAY CRYSTALLOGRAPHY (1.80 ANGSTROMS) IN COMPLEX WITH IRON-SULFUR (4FE-4S)</scope>
</reference>
<reference evidence="9 10 11" key="5">
    <citation type="journal article" date="2007" name="J. Mol. Biol.">
        <title>Crystal structure of family 5 uracil-DNA glycosylase bound to DNA.</title>
        <authorList>
            <person name="Kosaka H."/>
            <person name="Hoseki J."/>
            <person name="Nakagawa N."/>
            <person name="Kuramitsu S."/>
            <person name="Masui R."/>
        </authorList>
    </citation>
    <scope>X-RAY CRYSTALLOGRAPHY (1.55 ANGSTROMS) IN COMPLEX WITH IRON-SULFUR (4FE-4S) AND DNA</scope>
    <scope>FUNCTION</scope>
    <scope>CATALYTIC ACTIVITY</scope>
    <scope>MUTAGENESIS OF LEU-58 AND ASP-75</scope>
    <source>
        <strain>ATCC 27634 / DSM 579 / HB8</strain>
    </source>
</reference>
<proteinExistence type="evidence at protein level"/>
<accession>Q5SJ65</accession>